<accession>P84209</accession>
<reference evidence="4" key="1">
    <citation type="submission" date="2004-07" db="UniProtKB">
        <authorList>
            <person name="Chang I.-F."/>
            <person name="Kangling Z."/>
            <person name="Chou C.-H."/>
        </authorList>
    </citation>
    <scope>PROTEIN SEQUENCE</scope>
    <source>
        <strain>cv. Major</strain>
        <tissue>Leaf</tissue>
    </source>
</reference>
<name>MDHM_IMPCY</name>
<comment type="catalytic activity">
    <reaction evidence="2 3">
        <text>(S)-malate + NAD(+) = oxaloacetate + NADH + H(+)</text>
        <dbReference type="Rhea" id="RHEA:21432"/>
        <dbReference type="ChEBI" id="CHEBI:15378"/>
        <dbReference type="ChEBI" id="CHEBI:15589"/>
        <dbReference type="ChEBI" id="CHEBI:16452"/>
        <dbReference type="ChEBI" id="CHEBI:57540"/>
        <dbReference type="ChEBI" id="CHEBI:57945"/>
        <dbReference type="EC" id="1.1.1.37"/>
    </reaction>
</comment>
<comment type="subunit">
    <text evidence="2">Homodimer.</text>
</comment>
<comment type="subcellular location">
    <subcellularLocation>
        <location evidence="1">Mitochondrion matrix</location>
    </subcellularLocation>
</comment>
<comment type="similarity">
    <text evidence="4">Belongs to the LDH/MDH superfamily. MDH type 1 family.</text>
</comment>
<keyword id="KW-0903">Direct protein sequencing</keyword>
<keyword id="KW-0496">Mitochondrion</keyword>
<keyword id="KW-0520">NAD</keyword>
<keyword id="KW-0560">Oxidoreductase</keyword>
<keyword id="KW-0816">Tricarboxylic acid cycle</keyword>
<sequence length="31" mass="3110">VAILGAAGGIGQPLSLLMKDDLFNINAGIVK</sequence>
<organism>
    <name type="scientific">Imperata cylindrica</name>
    <name type="common">Cogon grass</name>
    <dbReference type="NCBI Taxonomy" id="80369"/>
    <lineage>
        <taxon>Eukaryota</taxon>
        <taxon>Viridiplantae</taxon>
        <taxon>Streptophyta</taxon>
        <taxon>Embryophyta</taxon>
        <taxon>Tracheophyta</taxon>
        <taxon>Spermatophyta</taxon>
        <taxon>Magnoliopsida</taxon>
        <taxon>Liliopsida</taxon>
        <taxon>Poales</taxon>
        <taxon>Poaceae</taxon>
        <taxon>PACMAD clade</taxon>
        <taxon>Panicoideae</taxon>
        <taxon>Andropogonodae</taxon>
        <taxon>Andropogoneae</taxon>
        <taxon>Germainiinae</taxon>
        <taxon>Imperata</taxon>
    </lineage>
</organism>
<feature type="chain" id="PRO_0000113339" description="Malate dehydrogenase, mitochondrial">
    <location>
        <begin position="1" status="less than"/>
        <end position="31" status="greater than"/>
    </location>
</feature>
<feature type="binding site" evidence="2">
    <location>
        <begin position="9"/>
        <end position="19" status="greater than"/>
    </location>
    <ligand>
        <name>NAD(+)</name>
        <dbReference type="ChEBI" id="CHEBI:57540"/>
    </ligand>
</feature>
<feature type="binding site" evidence="2">
    <location>
        <begin position="20" status="less than"/>
        <end position="31" status="greater than"/>
    </location>
    <ligand>
        <name>NAD(+)</name>
        <dbReference type="ChEBI" id="CHEBI:57540"/>
    </ligand>
</feature>
<feature type="non-consecutive residues" evidence="4">
    <location>
        <begin position="19"/>
        <end position="20"/>
    </location>
</feature>
<feature type="non-terminal residue">
    <location>
        <position position="1"/>
    </location>
</feature>
<feature type="non-terminal residue">
    <location>
        <position position="31"/>
    </location>
</feature>
<proteinExistence type="evidence at protein level"/>
<dbReference type="EC" id="1.1.1.37"/>
<dbReference type="SMR" id="P84209"/>
<dbReference type="GO" id="GO:0005759">
    <property type="term" value="C:mitochondrial matrix"/>
    <property type="evidence" value="ECO:0007669"/>
    <property type="project" value="UniProtKB-SubCell"/>
</dbReference>
<dbReference type="GO" id="GO:0030060">
    <property type="term" value="F:L-malate dehydrogenase (NAD+) activity"/>
    <property type="evidence" value="ECO:0007669"/>
    <property type="project" value="UniProtKB-EC"/>
</dbReference>
<dbReference type="GO" id="GO:0006099">
    <property type="term" value="P:tricarboxylic acid cycle"/>
    <property type="evidence" value="ECO:0007669"/>
    <property type="project" value="UniProtKB-KW"/>
</dbReference>
<protein>
    <recommendedName>
        <fullName>Malate dehydrogenase, mitochondrial</fullName>
        <ecNumber>1.1.1.37</ecNumber>
    </recommendedName>
</protein>
<evidence type="ECO:0000250" key="1"/>
<evidence type="ECO:0000250" key="2">
    <source>
        <dbReference type="UniProtKB" id="P61889"/>
    </source>
</evidence>
<evidence type="ECO:0000255" key="3">
    <source>
        <dbReference type="PROSITE-ProRule" id="PRU10004"/>
    </source>
</evidence>
<evidence type="ECO:0000305" key="4"/>